<dbReference type="EMBL" id="Z18946">
    <property type="protein sequence ID" value="CAA79418.1"/>
    <property type="molecule type" value="Genomic_DNA"/>
</dbReference>
<dbReference type="PIR" id="S30987">
    <property type="entry name" value="S30987"/>
</dbReference>
<dbReference type="RefSeq" id="NP_039706.1">
    <property type="nucleotide sequence ID" value="NC_001335.1"/>
</dbReference>
<dbReference type="GeneID" id="2942958"/>
<dbReference type="KEGG" id="vg:2942958"/>
<dbReference type="OrthoDB" id="24255at10239"/>
<dbReference type="Proteomes" id="UP000002123">
    <property type="component" value="Genome"/>
</dbReference>
<name>VG42_BPML5</name>
<organism>
    <name type="scientific">Mycobacterium phage L5</name>
    <name type="common">Mycobacteriophage L5</name>
    <dbReference type="NCBI Taxonomy" id="31757"/>
    <lineage>
        <taxon>Viruses</taxon>
        <taxon>Duplodnaviria</taxon>
        <taxon>Heunggongvirae</taxon>
        <taxon>Uroviricota</taxon>
        <taxon>Caudoviricetes</taxon>
        <taxon>Fromanvirus</taxon>
    </lineage>
</organism>
<proteinExistence type="predicted"/>
<organismHost>
    <name type="scientific">Mycobacterium</name>
    <dbReference type="NCBI Taxonomy" id="1763"/>
</organismHost>
<gene>
    <name type="primary">42</name>
</gene>
<reference key="1">
    <citation type="journal article" date="1993" name="Mol. Microbiol.">
        <title>DNA sequence, structure and gene expression of mycobacteriophage L5: a phage system for mycobacterial genetics.</title>
        <authorList>
            <person name="Hatfull G.F."/>
            <person name="Sarkis G.J."/>
        </authorList>
    </citation>
    <scope>NUCLEOTIDE SEQUENCE [LARGE SCALE GENOMIC DNA]</scope>
</reference>
<keyword id="KW-1185">Reference proteome</keyword>
<feature type="chain" id="PRO_0000164768" description="Gene 42 protein">
    <location>
        <begin position="1"/>
        <end position="72"/>
    </location>
</feature>
<sequence length="72" mass="7991">MPQAKVVLPAPNGLDEELMGLAIYKLNELGTLEGNEIGVYTAERPDNVPEDCPDNMVFLEFRASVIPYLGRR</sequence>
<accession>Q05253</accession>
<protein>
    <recommendedName>
        <fullName>Gene 42 protein</fullName>
    </recommendedName>
    <alternativeName>
        <fullName>Gp42</fullName>
    </alternativeName>
</protein>